<organismHost>
    <name type="scientific">Lactuca sativa</name>
    <name type="common">Garden lettuce</name>
    <dbReference type="NCBI Taxonomy" id="4236"/>
</organismHost>
<sequence length="211" mass="24776">MSQFKDKSILKSNEVPEEMFTCISGSTDTNSEMKTVISKEKNEEKSLVKTKNKVNRIRLFLNYHVKELPIMDHSIAERNSEMMKTVMRYKTSYREVTRFLIGSWLLFAEKLIPPFNMKAIIIIETDQELVDVADFEGIEILLGNNIQSCLDSFYMRFYKEDLILYNTANELLLLIDNFKIPKYFAKLDMNQVRLKKIIEKKYMSLIKAGKL</sequence>
<feature type="chain" id="PRO_0000391507" description="Uncharacterized 25 kDa protein">
    <location>
        <begin position="1"/>
        <end position="211"/>
    </location>
</feature>
<accession>Q8BCV8</accession>
<dbReference type="EMBL" id="AF525933">
    <property type="protein sequence ID" value="AAN60446.1"/>
    <property type="molecule type" value="Genomic_RNA"/>
</dbReference>
<dbReference type="Proteomes" id="UP000887520">
    <property type="component" value="Genome"/>
</dbReference>
<proteinExistence type="predicted"/>
<organism>
    <name type="scientific">Mirafiori lettuce virus (isolate Lettuce/Netherlands/LS301-O)</name>
    <name type="common">MiLV</name>
    <name type="synonym">Mirafiori lettuce big-vein virus</name>
    <dbReference type="NCBI Taxonomy" id="652964"/>
    <lineage>
        <taxon>Viruses</taxon>
        <taxon>Riboviria</taxon>
        <taxon>Orthornavirae</taxon>
        <taxon>Negarnaviricota</taxon>
        <taxon>Haploviricotina</taxon>
        <taxon>Milneviricetes</taxon>
        <taxon>Serpentovirales</taxon>
        <taxon>Aspiviridae</taxon>
        <taxon>Ophiovirus</taxon>
        <taxon>Ophiovirus mirafioriense</taxon>
    </lineage>
</organism>
<name>VG25_MILVL</name>
<reference key="1">
    <citation type="journal article" date="2002" name="J. Gen. Virol.">
        <title>Nucleotide sequence and genomic organization of an ophiovirus associated with lettuce big-vein disease.</title>
        <authorList>
            <person name="Van Der Wilk F."/>
            <person name="Dullemans A.M."/>
            <person name="Verbeek M."/>
            <person name="Van Den Heuvel J.F.J.M."/>
        </authorList>
    </citation>
    <scope>NUCLEOTIDE SEQUENCE [GENOMIC RNA]</scope>
</reference>
<protein>
    <recommendedName>
        <fullName>Uncharacterized 25 kDa protein</fullName>
    </recommendedName>
</protein>